<organism>
    <name type="scientific">Salmonella paratyphi A (strain AKU_12601)</name>
    <dbReference type="NCBI Taxonomy" id="554290"/>
    <lineage>
        <taxon>Bacteria</taxon>
        <taxon>Pseudomonadati</taxon>
        <taxon>Pseudomonadota</taxon>
        <taxon>Gammaproteobacteria</taxon>
        <taxon>Enterobacterales</taxon>
        <taxon>Enterobacteriaceae</taxon>
        <taxon>Salmonella</taxon>
    </lineage>
</organism>
<evidence type="ECO:0000255" key="1">
    <source>
        <dbReference type="HAMAP-Rule" id="MF_01661"/>
    </source>
</evidence>
<feature type="chain" id="PRO_1000187165" description="D-ribose pyranase">
    <location>
        <begin position="1"/>
        <end position="139"/>
    </location>
</feature>
<feature type="active site" description="Proton donor" evidence="1">
    <location>
        <position position="20"/>
    </location>
</feature>
<feature type="binding site" evidence="1">
    <location>
        <position position="28"/>
    </location>
    <ligand>
        <name>substrate</name>
    </ligand>
</feature>
<feature type="binding site" evidence="1">
    <location>
        <position position="106"/>
    </location>
    <ligand>
        <name>substrate</name>
    </ligand>
</feature>
<feature type="binding site" evidence="1">
    <location>
        <begin position="128"/>
        <end position="130"/>
    </location>
    <ligand>
        <name>substrate</name>
    </ligand>
</feature>
<gene>
    <name evidence="1" type="primary">rbsD</name>
    <name type="ordered locus">SSPA3475</name>
</gene>
<dbReference type="EC" id="5.4.99.62" evidence="1"/>
<dbReference type="EMBL" id="FM200053">
    <property type="protein sequence ID" value="CAR61750.1"/>
    <property type="molecule type" value="Genomic_DNA"/>
</dbReference>
<dbReference type="RefSeq" id="WP_000715944.1">
    <property type="nucleotide sequence ID" value="NC_011147.1"/>
</dbReference>
<dbReference type="SMR" id="B5BIQ2"/>
<dbReference type="KEGG" id="sek:SSPA3475"/>
<dbReference type="HOGENOM" id="CLU_135498_0_0_6"/>
<dbReference type="UniPathway" id="UPA00916">
    <property type="reaction ID" value="UER00888"/>
</dbReference>
<dbReference type="Proteomes" id="UP000001869">
    <property type="component" value="Chromosome"/>
</dbReference>
<dbReference type="GO" id="GO:0005829">
    <property type="term" value="C:cytosol"/>
    <property type="evidence" value="ECO:0007669"/>
    <property type="project" value="TreeGrafter"/>
</dbReference>
<dbReference type="GO" id="GO:0062193">
    <property type="term" value="F:D-ribose pyranase activity"/>
    <property type="evidence" value="ECO:0007669"/>
    <property type="project" value="UniProtKB-EC"/>
</dbReference>
<dbReference type="GO" id="GO:0016872">
    <property type="term" value="F:intramolecular lyase activity"/>
    <property type="evidence" value="ECO:0007669"/>
    <property type="project" value="UniProtKB-UniRule"/>
</dbReference>
<dbReference type="GO" id="GO:0048029">
    <property type="term" value="F:monosaccharide binding"/>
    <property type="evidence" value="ECO:0007669"/>
    <property type="project" value="InterPro"/>
</dbReference>
<dbReference type="GO" id="GO:0019303">
    <property type="term" value="P:D-ribose catabolic process"/>
    <property type="evidence" value="ECO:0007669"/>
    <property type="project" value="UniProtKB-UniRule"/>
</dbReference>
<dbReference type="FunFam" id="3.40.1650.10:FF:000002">
    <property type="entry name" value="D-ribose pyranase"/>
    <property type="match status" value="1"/>
</dbReference>
<dbReference type="Gene3D" id="3.40.1650.10">
    <property type="entry name" value="RbsD-like domain"/>
    <property type="match status" value="1"/>
</dbReference>
<dbReference type="HAMAP" id="MF_01661">
    <property type="entry name" value="D_rib_pyranase"/>
    <property type="match status" value="1"/>
</dbReference>
<dbReference type="InterPro" id="IPR023064">
    <property type="entry name" value="D-ribose_pyranase"/>
</dbReference>
<dbReference type="InterPro" id="IPR023750">
    <property type="entry name" value="RbsD-like_sf"/>
</dbReference>
<dbReference type="InterPro" id="IPR007721">
    <property type="entry name" value="RbsD_FucU"/>
</dbReference>
<dbReference type="NCBIfam" id="NF008761">
    <property type="entry name" value="PRK11797.1"/>
    <property type="match status" value="1"/>
</dbReference>
<dbReference type="PANTHER" id="PTHR37831">
    <property type="entry name" value="D-RIBOSE PYRANASE"/>
    <property type="match status" value="1"/>
</dbReference>
<dbReference type="PANTHER" id="PTHR37831:SF1">
    <property type="entry name" value="D-RIBOSE PYRANASE"/>
    <property type="match status" value="1"/>
</dbReference>
<dbReference type="Pfam" id="PF05025">
    <property type="entry name" value="RbsD_FucU"/>
    <property type="match status" value="1"/>
</dbReference>
<dbReference type="SUPFAM" id="SSF102546">
    <property type="entry name" value="RbsD-like"/>
    <property type="match status" value="1"/>
</dbReference>
<accession>B5BIQ2</accession>
<proteinExistence type="inferred from homology"/>
<keyword id="KW-0119">Carbohydrate metabolism</keyword>
<keyword id="KW-0963">Cytoplasm</keyword>
<keyword id="KW-0413">Isomerase</keyword>
<sequence>MKKGTVLNSEISSVISRLGHTDTLVVCDAGLPIPNSTARIDMALTQGVPSFMQVVDVVTREMQVEAAILATEIKQQNPQLHETLLTHLEQLQQHQGNTIKISYTTHEQFKKLTADSQAVIRSGECSPYANVILCAGVTF</sequence>
<comment type="function">
    <text evidence="1">Catalyzes the interconversion of beta-pyran and beta-furan forms of D-ribose.</text>
</comment>
<comment type="catalytic activity">
    <reaction evidence="1">
        <text>beta-D-ribopyranose = beta-D-ribofuranose</text>
        <dbReference type="Rhea" id="RHEA:25432"/>
        <dbReference type="ChEBI" id="CHEBI:27476"/>
        <dbReference type="ChEBI" id="CHEBI:47002"/>
        <dbReference type="EC" id="5.4.99.62"/>
    </reaction>
</comment>
<comment type="pathway">
    <text evidence="1">Carbohydrate metabolism; D-ribose degradation; D-ribose 5-phosphate from beta-D-ribopyranose: step 1/2.</text>
</comment>
<comment type="subunit">
    <text evidence="1">Homodecamer.</text>
</comment>
<comment type="subcellular location">
    <subcellularLocation>
        <location evidence="1">Cytoplasm</location>
    </subcellularLocation>
</comment>
<comment type="similarity">
    <text evidence="1">Belongs to the RbsD / FucU family. RbsD subfamily.</text>
</comment>
<reference key="1">
    <citation type="journal article" date="2009" name="BMC Genomics">
        <title>Pseudogene accumulation in the evolutionary histories of Salmonella enterica serovars Paratyphi A and Typhi.</title>
        <authorList>
            <person name="Holt K.E."/>
            <person name="Thomson N.R."/>
            <person name="Wain J."/>
            <person name="Langridge G.C."/>
            <person name="Hasan R."/>
            <person name="Bhutta Z.A."/>
            <person name="Quail M.A."/>
            <person name="Norbertczak H."/>
            <person name="Walker D."/>
            <person name="Simmonds M."/>
            <person name="White B."/>
            <person name="Bason N."/>
            <person name="Mungall K."/>
            <person name="Dougan G."/>
            <person name="Parkhill J."/>
        </authorList>
    </citation>
    <scope>NUCLEOTIDE SEQUENCE [LARGE SCALE GENOMIC DNA]</scope>
    <source>
        <strain>AKU_12601</strain>
    </source>
</reference>
<name>RBSD_SALPK</name>
<protein>
    <recommendedName>
        <fullName evidence="1">D-ribose pyranase</fullName>
        <ecNumber evidence="1">5.4.99.62</ecNumber>
    </recommendedName>
</protein>